<organism>
    <name type="scientific">Streptococcus pneumoniae (strain ATCC 700669 / Spain 23F-1)</name>
    <dbReference type="NCBI Taxonomy" id="561276"/>
    <lineage>
        <taxon>Bacteria</taxon>
        <taxon>Bacillati</taxon>
        <taxon>Bacillota</taxon>
        <taxon>Bacilli</taxon>
        <taxon>Lactobacillales</taxon>
        <taxon>Streptococcaceae</taxon>
        <taxon>Streptococcus</taxon>
    </lineage>
</organism>
<reference key="1">
    <citation type="journal article" date="2009" name="J. Bacteriol.">
        <title>Role of conjugative elements in the evolution of the multidrug-resistant pandemic clone Streptococcus pneumoniae Spain23F ST81.</title>
        <authorList>
            <person name="Croucher N.J."/>
            <person name="Walker D."/>
            <person name="Romero P."/>
            <person name="Lennard N."/>
            <person name="Paterson G.K."/>
            <person name="Bason N.C."/>
            <person name="Mitchell A.M."/>
            <person name="Quail M.A."/>
            <person name="Andrew P.W."/>
            <person name="Parkhill J."/>
            <person name="Bentley S.D."/>
            <person name="Mitchell T.J."/>
        </authorList>
    </citation>
    <scope>NUCLEOTIDE SEQUENCE [LARGE SCALE GENOMIC DNA]</scope>
    <source>
        <strain>ATCC 700669 / Spain 23F-1</strain>
    </source>
</reference>
<keyword id="KW-0963">Cytoplasm</keyword>
<keyword id="KW-0489">Methyltransferase</keyword>
<keyword id="KW-0698">rRNA processing</keyword>
<keyword id="KW-0949">S-adenosyl-L-methionine</keyword>
<keyword id="KW-0808">Transferase</keyword>
<gene>
    <name evidence="1" type="primary">rlmH</name>
    <name type="ordered locus">SPN23F22710</name>
</gene>
<protein>
    <recommendedName>
        <fullName evidence="1">Ribosomal RNA large subunit methyltransferase H</fullName>
        <ecNumber evidence="1">2.1.1.177</ecNumber>
    </recommendedName>
    <alternativeName>
        <fullName evidence="1">23S rRNA (pseudouridine1915-N3)-methyltransferase</fullName>
    </alternativeName>
    <alternativeName>
        <fullName evidence="1">23S rRNA m3Psi1915 methyltransferase</fullName>
    </alternativeName>
    <alternativeName>
        <fullName evidence="1">rRNA (pseudouridine-N3-)-methyltransferase RlmH</fullName>
    </alternativeName>
</protein>
<evidence type="ECO:0000255" key="1">
    <source>
        <dbReference type="HAMAP-Rule" id="MF_00658"/>
    </source>
</evidence>
<proteinExistence type="inferred from homology"/>
<accession>B8ZQC9</accession>
<feature type="chain" id="PRO_1000199832" description="Ribosomal RNA large subunit methyltransferase H">
    <location>
        <begin position="1"/>
        <end position="159"/>
    </location>
</feature>
<feature type="binding site" evidence="1">
    <location>
        <position position="76"/>
    </location>
    <ligand>
        <name>S-adenosyl-L-methionine</name>
        <dbReference type="ChEBI" id="CHEBI:59789"/>
    </ligand>
</feature>
<feature type="binding site" evidence="1">
    <location>
        <position position="108"/>
    </location>
    <ligand>
        <name>S-adenosyl-L-methionine</name>
        <dbReference type="ChEBI" id="CHEBI:59789"/>
    </ligand>
</feature>
<feature type="binding site" evidence="1">
    <location>
        <begin position="127"/>
        <end position="132"/>
    </location>
    <ligand>
        <name>S-adenosyl-L-methionine</name>
        <dbReference type="ChEBI" id="CHEBI:59789"/>
    </ligand>
</feature>
<name>RLMH_STRPJ</name>
<sequence length="159" mass="18099">MKIKVVTVGKLKEKYLKDGIAEYSKRISRFAKFEMIELSDEKTPDKASESENQKILEIEGQRILSKIADRDFVIVLAIEGKTFFSEEFSKQLEETSIKGFSTLTFIIGGSLGLSSSVKNRANLSVSFGRLTLPHQLMRLVLVEQIYRAFTIQQGFPYHK</sequence>
<comment type="function">
    <text evidence="1">Specifically methylates the pseudouridine at position 1915 (m3Psi1915) in 23S rRNA.</text>
</comment>
<comment type="catalytic activity">
    <reaction evidence="1">
        <text>pseudouridine(1915) in 23S rRNA + S-adenosyl-L-methionine = N(3)-methylpseudouridine(1915) in 23S rRNA + S-adenosyl-L-homocysteine + H(+)</text>
        <dbReference type="Rhea" id="RHEA:42752"/>
        <dbReference type="Rhea" id="RHEA-COMP:10221"/>
        <dbReference type="Rhea" id="RHEA-COMP:10222"/>
        <dbReference type="ChEBI" id="CHEBI:15378"/>
        <dbReference type="ChEBI" id="CHEBI:57856"/>
        <dbReference type="ChEBI" id="CHEBI:59789"/>
        <dbReference type="ChEBI" id="CHEBI:65314"/>
        <dbReference type="ChEBI" id="CHEBI:74486"/>
        <dbReference type="EC" id="2.1.1.177"/>
    </reaction>
</comment>
<comment type="subunit">
    <text evidence="1">Homodimer.</text>
</comment>
<comment type="subcellular location">
    <subcellularLocation>
        <location evidence="1">Cytoplasm</location>
    </subcellularLocation>
</comment>
<comment type="similarity">
    <text evidence="1">Belongs to the RNA methyltransferase RlmH family.</text>
</comment>
<dbReference type="EC" id="2.1.1.177" evidence="1"/>
<dbReference type="EMBL" id="FM211187">
    <property type="protein sequence ID" value="CAR70000.1"/>
    <property type="molecule type" value="Genomic_DNA"/>
</dbReference>
<dbReference type="RefSeq" id="WP_000695929.1">
    <property type="nucleotide sequence ID" value="NC_011900.1"/>
</dbReference>
<dbReference type="SMR" id="B8ZQC9"/>
<dbReference type="GeneID" id="45652538"/>
<dbReference type="KEGG" id="sne:SPN23F22710"/>
<dbReference type="HOGENOM" id="CLU_100552_0_0_9"/>
<dbReference type="GO" id="GO:0005737">
    <property type="term" value="C:cytoplasm"/>
    <property type="evidence" value="ECO:0007669"/>
    <property type="project" value="UniProtKB-SubCell"/>
</dbReference>
<dbReference type="GO" id="GO:0070038">
    <property type="term" value="F:rRNA (pseudouridine-N3-)-methyltransferase activity"/>
    <property type="evidence" value="ECO:0007669"/>
    <property type="project" value="UniProtKB-UniRule"/>
</dbReference>
<dbReference type="CDD" id="cd18081">
    <property type="entry name" value="RlmH-like"/>
    <property type="match status" value="1"/>
</dbReference>
<dbReference type="Gene3D" id="3.40.1280.10">
    <property type="match status" value="1"/>
</dbReference>
<dbReference type="HAMAP" id="MF_00658">
    <property type="entry name" value="23SrRNA_methyltr_H"/>
    <property type="match status" value="1"/>
</dbReference>
<dbReference type="InterPro" id="IPR029028">
    <property type="entry name" value="Alpha/beta_knot_MTases"/>
</dbReference>
<dbReference type="InterPro" id="IPR003742">
    <property type="entry name" value="RlmH-like"/>
</dbReference>
<dbReference type="InterPro" id="IPR029026">
    <property type="entry name" value="tRNA_m1G_MTases_N"/>
</dbReference>
<dbReference type="NCBIfam" id="NF000985">
    <property type="entry name" value="PRK00103.1-3"/>
    <property type="match status" value="1"/>
</dbReference>
<dbReference type="NCBIfam" id="TIGR00246">
    <property type="entry name" value="tRNA_RlmH_YbeA"/>
    <property type="match status" value="1"/>
</dbReference>
<dbReference type="PANTHER" id="PTHR33603">
    <property type="entry name" value="METHYLTRANSFERASE"/>
    <property type="match status" value="1"/>
</dbReference>
<dbReference type="PANTHER" id="PTHR33603:SF1">
    <property type="entry name" value="RIBOSOMAL RNA LARGE SUBUNIT METHYLTRANSFERASE H"/>
    <property type="match status" value="1"/>
</dbReference>
<dbReference type="Pfam" id="PF02590">
    <property type="entry name" value="SPOUT_MTase"/>
    <property type="match status" value="1"/>
</dbReference>
<dbReference type="PIRSF" id="PIRSF004505">
    <property type="entry name" value="MT_bac"/>
    <property type="match status" value="1"/>
</dbReference>
<dbReference type="SUPFAM" id="SSF75217">
    <property type="entry name" value="alpha/beta knot"/>
    <property type="match status" value="1"/>
</dbReference>